<proteinExistence type="inferred from homology"/>
<dbReference type="EC" id="6.1.1.14" evidence="1"/>
<dbReference type="EMBL" id="AE017143">
    <property type="protein sequence ID" value="AAP96663.1"/>
    <property type="molecule type" value="Genomic_DNA"/>
</dbReference>
<dbReference type="RefSeq" id="WP_010945690.1">
    <property type="nucleotide sequence ID" value="NC_002940.2"/>
</dbReference>
<dbReference type="SMR" id="Q7VKG5"/>
<dbReference type="STRING" id="233412.HD_1943"/>
<dbReference type="KEGG" id="hdu:HD_1943"/>
<dbReference type="eggNOG" id="COG0752">
    <property type="taxonomic scope" value="Bacteria"/>
</dbReference>
<dbReference type="HOGENOM" id="CLU_057066_1_0_6"/>
<dbReference type="OrthoDB" id="9802183at2"/>
<dbReference type="Proteomes" id="UP000001022">
    <property type="component" value="Chromosome"/>
</dbReference>
<dbReference type="GO" id="GO:0005829">
    <property type="term" value="C:cytosol"/>
    <property type="evidence" value="ECO:0007669"/>
    <property type="project" value="TreeGrafter"/>
</dbReference>
<dbReference type="GO" id="GO:0005524">
    <property type="term" value="F:ATP binding"/>
    <property type="evidence" value="ECO:0007669"/>
    <property type="project" value="UniProtKB-UniRule"/>
</dbReference>
<dbReference type="GO" id="GO:0004820">
    <property type="term" value="F:glycine-tRNA ligase activity"/>
    <property type="evidence" value="ECO:0007669"/>
    <property type="project" value="UniProtKB-UniRule"/>
</dbReference>
<dbReference type="GO" id="GO:0006426">
    <property type="term" value="P:glycyl-tRNA aminoacylation"/>
    <property type="evidence" value="ECO:0007669"/>
    <property type="project" value="UniProtKB-UniRule"/>
</dbReference>
<dbReference type="CDD" id="cd00733">
    <property type="entry name" value="GlyRS_alpha_core"/>
    <property type="match status" value="1"/>
</dbReference>
<dbReference type="FunFam" id="3.30.930.10:FF:000006">
    <property type="entry name" value="Glycine--tRNA ligase alpha subunit"/>
    <property type="match status" value="1"/>
</dbReference>
<dbReference type="Gene3D" id="3.30.930.10">
    <property type="entry name" value="Bira Bifunctional Protein, Domain 2"/>
    <property type="match status" value="1"/>
</dbReference>
<dbReference type="Gene3D" id="1.20.58.180">
    <property type="entry name" value="Class II aaRS and biotin synthetases, domain 2"/>
    <property type="match status" value="1"/>
</dbReference>
<dbReference type="HAMAP" id="MF_00254">
    <property type="entry name" value="Gly_tRNA_synth_alpha"/>
    <property type="match status" value="1"/>
</dbReference>
<dbReference type="InterPro" id="IPR045864">
    <property type="entry name" value="aa-tRNA-synth_II/BPL/LPL"/>
</dbReference>
<dbReference type="InterPro" id="IPR006194">
    <property type="entry name" value="Gly-tRNA-synth_heterodimer"/>
</dbReference>
<dbReference type="InterPro" id="IPR002310">
    <property type="entry name" value="Gly-tRNA_ligase_asu"/>
</dbReference>
<dbReference type="NCBIfam" id="TIGR00388">
    <property type="entry name" value="glyQ"/>
    <property type="match status" value="1"/>
</dbReference>
<dbReference type="NCBIfam" id="NF006827">
    <property type="entry name" value="PRK09348.1"/>
    <property type="match status" value="1"/>
</dbReference>
<dbReference type="PANTHER" id="PTHR30075:SF2">
    <property type="entry name" value="GLYCINE--TRNA LIGASE, CHLOROPLASTIC_MITOCHONDRIAL 2"/>
    <property type="match status" value="1"/>
</dbReference>
<dbReference type="PANTHER" id="PTHR30075">
    <property type="entry name" value="GLYCYL-TRNA SYNTHETASE"/>
    <property type="match status" value="1"/>
</dbReference>
<dbReference type="Pfam" id="PF02091">
    <property type="entry name" value="tRNA-synt_2e"/>
    <property type="match status" value="1"/>
</dbReference>
<dbReference type="PRINTS" id="PR01044">
    <property type="entry name" value="TRNASYNTHGA"/>
</dbReference>
<dbReference type="SUPFAM" id="SSF55681">
    <property type="entry name" value="Class II aaRS and biotin synthetases"/>
    <property type="match status" value="1"/>
</dbReference>
<dbReference type="PROSITE" id="PS50861">
    <property type="entry name" value="AA_TRNA_LIGASE_II_GLYAB"/>
    <property type="match status" value="1"/>
</dbReference>
<accession>Q7VKG5</accession>
<feature type="chain" id="PRO_0000072840" description="Glycine--tRNA ligase alpha subunit">
    <location>
        <begin position="1"/>
        <end position="302"/>
    </location>
</feature>
<name>SYGA_HAEDU</name>
<keyword id="KW-0030">Aminoacyl-tRNA synthetase</keyword>
<keyword id="KW-0067">ATP-binding</keyword>
<keyword id="KW-0963">Cytoplasm</keyword>
<keyword id="KW-0436">Ligase</keyword>
<keyword id="KW-0547">Nucleotide-binding</keyword>
<keyword id="KW-0648">Protein biosynthesis</keyword>
<keyword id="KW-1185">Reference proteome</keyword>
<organism>
    <name type="scientific">Haemophilus ducreyi (strain 35000HP / ATCC 700724)</name>
    <dbReference type="NCBI Taxonomy" id="233412"/>
    <lineage>
        <taxon>Bacteria</taxon>
        <taxon>Pseudomonadati</taxon>
        <taxon>Pseudomonadota</taxon>
        <taxon>Gammaproteobacteria</taxon>
        <taxon>Pasteurellales</taxon>
        <taxon>Pasteurellaceae</taxon>
        <taxon>Haemophilus</taxon>
    </lineage>
</organism>
<reference key="1">
    <citation type="submission" date="2003-06" db="EMBL/GenBank/DDBJ databases">
        <title>The complete genome sequence of Haemophilus ducreyi.</title>
        <authorList>
            <person name="Munson R.S. Jr."/>
            <person name="Ray W.C."/>
            <person name="Mahairas G."/>
            <person name="Sabo P."/>
            <person name="Mungur R."/>
            <person name="Johnson L."/>
            <person name="Nguyen D."/>
            <person name="Wang J."/>
            <person name="Forst C."/>
            <person name="Hood L."/>
        </authorList>
    </citation>
    <scope>NUCLEOTIDE SEQUENCE [LARGE SCALE GENOMIC DNA]</scope>
    <source>
        <strain>35000HP / ATCC 700724</strain>
    </source>
</reference>
<protein>
    <recommendedName>
        <fullName evidence="1">Glycine--tRNA ligase alpha subunit</fullName>
        <ecNumber evidence="1">6.1.1.14</ecNumber>
    </recommendedName>
    <alternativeName>
        <fullName evidence="1">Glycyl-tRNA synthetase alpha subunit</fullName>
        <shortName evidence="1">GlyRS</shortName>
    </alternativeName>
</protein>
<gene>
    <name evidence="1" type="primary">glyQ</name>
    <name type="ordered locus">HD_1943</name>
</gene>
<comment type="catalytic activity">
    <reaction evidence="1">
        <text>tRNA(Gly) + glycine + ATP = glycyl-tRNA(Gly) + AMP + diphosphate</text>
        <dbReference type="Rhea" id="RHEA:16013"/>
        <dbReference type="Rhea" id="RHEA-COMP:9664"/>
        <dbReference type="Rhea" id="RHEA-COMP:9683"/>
        <dbReference type="ChEBI" id="CHEBI:30616"/>
        <dbReference type="ChEBI" id="CHEBI:33019"/>
        <dbReference type="ChEBI" id="CHEBI:57305"/>
        <dbReference type="ChEBI" id="CHEBI:78442"/>
        <dbReference type="ChEBI" id="CHEBI:78522"/>
        <dbReference type="ChEBI" id="CHEBI:456215"/>
        <dbReference type="EC" id="6.1.1.14"/>
    </reaction>
</comment>
<comment type="subunit">
    <text evidence="1">Tetramer of two alpha and two beta subunits.</text>
</comment>
<comment type="subcellular location">
    <subcellularLocation>
        <location evidence="1">Cytoplasm</location>
    </subcellularLocation>
</comment>
<comment type="similarity">
    <text evidence="1">Belongs to the class-II aminoacyl-tRNA synthetase family.</text>
</comment>
<sequence>MSTKFNVKTFQGMILALQEYWANVGCTIVQPFDMEVGAGTSHPMTALRALGPEPMAFAYVQPSRRPTDGRYGENPNRLQHYYQFQVVIKPSPDNIQELYLGSLKMLGFDPTQHDIRFVEDNWENPTLGAWGLGWEVWLNGMEVTQFTYFQQVGGLECKPVTGEVTYGLERLAMYIQGVDSVYDLVYSDGPLGKTTYGDVFHQNEVEQSTYNFEYADVDFLFKAFEQYEKEAQELLALEKPLPLPAYERVLKAAHSFNMLDARKAISVTERQRYILRIRALTKGVAEAYYASREALGFPGCNK</sequence>
<evidence type="ECO:0000255" key="1">
    <source>
        <dbReference type="HAMAP-Rule" id="MF_00254"/>
    </source>
</evidence>